<feature type="chain" id="PRO_0000100149" description="cAMP-activated global transcriptional regulator CRP">
    <location>
        <begin position="1"/>
        <end position="209"/>
    </location>
</feature>
<feature type="domain" description="HTH crp-type" evidence="2">
    <location>
        <begin position="137"/>
        <end position="209"/>
    </location>
</feature>
<feature type="DNA-binding region" description="H-T-H motif" evidence="2">
    <location>
        <begin position="179"/>
        <end position="185"/>
    </location>
</feature>
<feature type="region of interest" description="Activating region 2 (AR2); probably contacts the N-terminus of RpoA" evidence="1">
    <location>
        <begin position="19"/>
        <end position="21"/>
    </location>
</feature>
<feature type="region of interest" description="Activating region 3 (AR3); probably contacts sigma-70 (RpoD)" evidence="1">
    <location>
        <begin position="52"/>
        <end position="58"/>
    </location>
</feature>
<feature type="region of interest" description="Activating region 1 (AR1); probably contacts the C-terminus of RpoA" evidence="1">
    <location>
        <begin position="153"/>
        <end position="162"/>
    </location>
</feature>
<feature type="binding site" evidence="1">
    <location>
        <begin position="56"/>
        <end position="62"/>
    </location>
    <ligand>
        <name>3',5'-cyclic AMP</name>
        <dbReference type="ChEBI" id="CHEBI:58165"/>
        <label>1</label>
    </ligand>
</feature>
<feature type="binding site" evidence="1">
    <location>
        <begin position="71"/>
        <end position="73"/>
    </location>
    <ligand>
        <name>3',5'-cyclic AMP</name>
        <dbReference type="ChEBI" id="CHEBI:58165"/>
        <label>1</label>
    </ligand>
</feature>
<feature type="binding site" evidence="1">
    <location>
        <begin position="82"/>
        <end position="83"/>
    </location>
    <ligand>
        <name>3',5'-cyclic AMP</name>
        <dbReference type="ChEBI" id="CHEBI:58165"/>
        <label>1</label>
    </ligand>
</feature>
<feature type="binding site" evidence="1">
    <location>
        <begin position="127"/>
        <end position="128"/>
    </location>
    <ligand>
        <name>3',5'-cyclic AMP</name>
        <dbReference type="ChEBI" id="CHEBI:58165"/>
        <label>1</label>
    </ligand>
</feature>
<feature type="binding site" evidence="1">
    <location>
        <begin position="135"/>
        <end position="136"/>
    </location>
    <ligand>
        <name>3',5'-cyclic AMP</name>
        <dbReference type="ChEBI" id="CHEBI:58165"/>
        <label>2</label>
    </ligand>
</feature>
<feature type="binding site" evidence="1">
    <location>
        <begin position="170"/>
        <end position="180"/>
    </location>
    <ligand>
        <name>3',5'-cyclic AMP</name>
        <dbReference type="ChEBI" id="CHEBI:58165"/>
        <label>2</label>
    </ligand>
</feature>
<feature type="site" description="Activating region 2 (AR2); probably contacts the N-terminus of RpoA" evidence="1">
    <location>
        <position position="96"/>
    </location>
</feature>
<feature type="site" description="Activating region 2 (AR2); probably contacts the N-terminus of RpoA" evidence="1">
    <location>
        <position position="101"/>
    </location>
</feature>
<feature type="modified residue" description="N6-acetyllysine" evidence="1">
    <location>
        <position position="100"/>
    </location>
</feature>
<name>CRP_PASMU</name>
<gene>
    <name type="primary">crp</name>
    <name type="ordered locus">PM1157</name>
</gene>
<protein>
    <recommendedName>
        <fullName>cAMP-activated global transcriptional regulator CRP</fullName>
    </recommendedName>
    <alternativeName>
        <fullName>Catabolite activator protein</fullName>
        <shortName>CAP</shortName>
    </alternativeName>
    <alternativeName>
        <fullName>Catabolite gene activator</fullName>
    </alternativeName>
    <alternativeName>
        <fullName>cAMP receptor protein</fullName>
        <shortName>CRP</shortName>
    </alternativeName>
    <alternativeName>
        <fullName>cAMP regulatory protein</fullName>
    </alternativeName>
</protein>
<keyword id="KW-0007">Acetylation</keyword>
<keyword id="KW-0010">Activator</keyword>
<keyword id="KW-0114">cAMP</keyword>
<keyword id="KW-0116">cAMP-binding</keyword>
<keyword id="KW-0238">DNA-binding</keyword>
<keyword id="KW-0547">Nucleotide-binding</keyword>
<keyword id="KW-1185">Reference proteome</keyword>
<keyword id="KW-0804">Transcription</keyword>
<keyword id="KW-0805">Transcription regulation</keyword>
<evidence type="ECO:0000250" key="1"/>
<evidence type="ECO:0000255" key="2">
    <source>
        <dbReference type="PROSITE-ProRule" id="PRU00387"/>
    </source>
</evidence>
<comment type="function">
    <text evidence="1">A global transcription regulator. Complexes with cyclic AMP (cAMP) which allosterically activates DNA binding to regulate transcription. It can act as an activator, repressor, coactivator or corepressor. Induces a severe bend in DNA. Acts as a negative regulator of its own synthesis as well as for adenylate cyclase (cyaA), which generates cAMP. Plays a major role in carbon catabolite repression (CCR) (By similarity).</text>
</comment>
<comment type="subunit">
    <text evidence="1">Homodimer, which upon binding cAMP is able to bind DNA. Binds the N- and C-terminus of RNA polymerase subunit RpoA and sigma-70 (RpoD) (By similarity).</text>
</comment>
<comment type="domain">
    <text evidence="1">The N-terminal domain binds cAMP and is responsible for homodimerization, while the C-terminal domain binds DNA when cAMP is bound.</text>
</comment>
<proteinExistence type="inferred from homology"/>
<sequence>MQTTPSIDPTLEWFLSHCHIHKYPSKSTLIHAGEKAETLYYLIKGSVAVLVKDEDGKEMILTYLSQGDFFGEAGLFEEGQLRSAWIKAKSPCEIAEISYKKFRQLIQVNPDILMHLSAQLARRLQNTSRQVSNLAFLDVTGRIAQTLLNLAKMPEAMTHPDGMQIKITRQEIGQMVGCSRETVGRILKMLEDQHLISAHGKTIVVYGTR</sequence>
<accession>O05689</accession>
<dbReference type="EMBL" id="U95380">
    <property type="protein sequence ID" value="AAB53064.1"/>
    <property type="molecule type" value="Genomic_DNA"/>
</dbReference>
<dbReference type="EMBL" id="AE004439">
    <property type="protein sequence ID" value="AAK03241.1"/>
    <property type="molecule type" value="Genomic_DNA"/>
</dbReference>
<dbReference type="SMR" id="O05689"/>
<dbReference type="STRING" id="272843.PM1157"/>
<dbReference type="EnsemblBacteria" id="AAK03241">
    <property type="protein sequence ID" value="AAK03241"/>
    <property type="gene ID" value="PM1157"/>
</dbReference>
<dbReference type="KEGG" id="pmu:PM1157"/>
<dbReference type="HOGENOM" id="CLU_075053_3_5_6"/>
<dbReference type="OrthoDB" id="61906at2"/>
<dbReference type="Proteomes" id="UP000000809">
    <property type="component" value="Chromosome"/>
</dbReference>
<dbReference type="GO" id="GO:0005829">
    <property type="term" value="C:cytosol"/>
    <property type="evidence" value="ECO:0007669"/>
    <property type="project" value="TreeGrafter"/>
</dbReference>
<dbReference type="GO" id="GO:0030552">
    <property type="term" value="F:cAMP binding"/>
    <property type="evidence" value="ECO:0007669"/>
    <property type="project" value="UniProtKB-KW"/>
</dbReference>
<dbReference type="GO" id="GO:0003677">
    <property type="term" value="F:DNA binding"/>
    <property type="evidence" value="ECO:0007669"/>
    <property type="project" value="UniProtKB-KW"/>
</dbReference>
<dbReference type="GO" id="GO:0003700">
    <property type="term" value="F:DNA-binding transcription factor activity"/>
    <property type="evidence" value="ECO:0007669"/>
    <property type="project" value="InterPro"/>
</dbReference>
<dbReference type="CDD" id="cd00038">
    <property type="entry name" value="CAP_ED"/>
    <property type="match status" value="1"/>
</dbReference>
<dbReference type="CDD" id="cd00092">
    <property type="entry name" value="HTH_CRP"/>
    <property type="match status" value="1"/>
</dbReference>
<dbReference type="FunFam" id="1.10.10.10:FF:000006">
    <property type="entry name" value="cAMP-activated global transcriptional regulator CRP"/>
    <property type="match status" value="1"/>
</dbReference>
<dbReference type="FunFam" id="2.60.120.10:FF:000001">
    <property type="entry name" value="cAMP-activated global transcriptional regulator CRP"/>
    <property type="match status" value="1"/>
</dbReference>
<dbReference type="Gene3D" id="2.60.120.10">
    <property type="entry name" value="Jelly Rolls"/>
    <property type="match status" value="1"/>
</dbReference>
<dbReference type="Gene3D" id="1.10.10.10">
    <property type="entry name" value="Winged helix-like DNA-binding domain superfamily/Winged helix DNA-binding domain"/>
    <property type="match status" value="1"/>
</dbReference>
<dbReference type="InterPro" id="IPR018488">
    <property type="entry name" value="cNMP-bd_CS"/>
</dbReference>
<dbReference type="InterPro" id="IPR000595">
    <property type="entry name" value="cNMP-bd_dom"/>
</dbReference>
<dbReference type="InterPro" id="IPR018490">
    <property type="entry name" value="cNMP-bd_dom_sf"/>
</dbReference>
<dbReference type="InterPro" id="IPR050397">
    <property type="entry name" value="Env_Response_Regulators"/>
</dbReference>
<dbReference type="InterPro" id="IPR012318">
    <property type="entry name" value="HTH_CRP"/>
</dbReference>
<dbReference type="InterPro" id="IPR014710">
    <property type="entry name" value="RmlC-like_jellyroll"/>
</dbReference>
<dbReference type="InterPro" id="IPR018335">
    <property type="entry name" value="Tscrpt_reg_HTH_Crp-type_CS"/>
</dbReference>
<dbReference type="InterPro" id="IPR036388">
    <property type="entry name" value="WH-like_DNA-bd_sf"/>
</dbReference>
<dbReference type="InterPro" id="IPR036390">
    <property type="entry name" value="WH_DNA-bd_sf"/>
</dbReference>
<dbReference type="NCBIfam" id="NF008732">
    <property type="entry name" value="PRK11753.1"/>
    <property type="match status" value="1"/>
</dbReference>
<dbReference type="PANTHER" id="PTHR24567">
    <property type="entry name" value="CRP FAMILY TRANSCRIPTIONAL REGULATORY PROTEIN"/>
    <property type="match status" value="1"/>
</dbReference>
<dbReference type="PANTHER" id="PTHR24567:SF68">
    <property type="entry name" value="DNA-BINDING TRANSCRIPTIONAL DUAL REGULATOR CRP"/>
    <property type="match status" value="1"/>
</dbReference>
<dbReference type="Pfam" id="PF00027">
    <property type="entry name" value="cNMP_binding"/>
    <property type="match status" value="1"/>
</dbReference>
<dbReference type="Pfam" id="PF13545">
    <property type="entry name" value="HTH_Crp_2"/>
    <property type="match status" value="1"/>
</dbReference>
<dbReference type="PRINTS" id="PR00034">
    <property type="entry name" value="HTHCRP"/>
</dbReference>
<dbReference type="SMART" id="SM00100">
    <property type="entry name" value="cNMP"/>
    <property type="match status" value="1"/>
</dbReference>
<dbReference type="SMART" id="SM00419">
    <property type="entry name" value="HTH_CRP"/>
    <property type="match status" value="1"/>
</dbReference>
<dbReference type="SUPFAM" id="SSF51206">
    <property type="entry name" value="cAMP-binding domain-like"/>
    <property type="match status" value="1"/>
</dbReference>
<dbReference type="SUPFAM" id="SSF46785">
    <property type="entry name" value="Winged helix' DNA-binding domain"/>
    <property type="match status" value="1"/>
</dbReference>
<dbReference type="PROSITE" id="PS00888">
    <property type="entry name" value="CNMP_BINDING_1"/>
    <property type="match status" value="1"/>
</dbReference>
<dbReference type="PROSITE" id="PS00889">
    <property type="entry name" value="CNMP_BINDING_2"/>
    <property type="match status" value="1"/>
</dbReference>
<dbReference type="PROSITE" id="PS50042">
    <property type="entry name" value="CNMP_BINDING_3"/>
    <property type="match status" value="1"/>
</dbReference>
<dbReference type="PROSITE" id="PS00042">
    <property type="entry name" value="HTH_CRP_1"/>
    <property type="match status" value="1"/>
</dbReference>
<dbReference type="PROSITE" id="PS51063">
    <property type="entry name" value="HTH_CRP_2"/>
    <property type="match status" value="1"/>
</dbReference>
<reference key="1">
    <citation type="submission" date="1997-03" db="EMBL/GenBank/DDBJ databases">
        <title>Isolation and characterization of crp mutants in Pasteurella multocida.</title>
        <authorList>
            <person name="Roland K.L."/>
            <person name="Mukkur T.K."/>
            <person name="Ball T.K."/>
        </authorList>
    </citation>
    <scope>NUCLEOTIDE SEQUENCE [GENOMIC DNA]</scope>
</reference>
<reference key="2">
    <citation type="journal article" date="2001" name="Proc. Natl. Acad. Sci. U.S.A.">
        <title>Complete genomic sequence of Pasteurella multocida Pm70.</title>
        <authorList>
            <person name="May B.J."/>
            <person name="Zhang Q."/>
            <person name="Li L.L."/>
            <person name="Paustian M.L."/>
            <person name="Whittam T.S."/>
            <person name="Kapur V."/>
        </authorList>
    </citation>
    <scope>NUCLEOTIDE SEQUENCE [LARGE SCALE GENOMIC DNA]</scope>
    <source>
        <strain>Pm70</strain>
    </source>
</reference>
<organism>
    <name type="scientific">Pasteurella multocida (strain Pm70)</name>
    <dbReference type="NCBI Taxonomy" id="272843"/>
    <lineage>
        <taxon>Bacteria</taxon>
        <taxon>Pseudomonadati</taxon>
        <taxon>Pseudomonadota</taxon>
        <taxon>Gammaproteobacteria</taxon>
        <taxon>Pasteurellales</taxon>
        <taxon>Pasteurellaceae</taxon>
        <taxon>Pasteurella</taxon>
    </lineage>
</organism>